<reference key="1">
    <citation type="journal article" date="2007" name="Plant Cell">
        <title>Dothideomycete-plant interactions illuminated by genome sequencing and EST analysis of the wheat pathogen Stagonospora nodorum.</title>
        <authorList>
            <person name="Hane J.K."/>
            <person name="Lowe R.G.T."/>
            <person name="Solomon P.S."/>
            <person name="Tan K.-C."/>
            <person name="Schoch C.L."/>
            <person name="Spatafora J.W."/>
            <person name="Crous P.W."/>
            <person name="Kodira C.D."/>
            <person name="Birren B.W."/>
            <person name="Galagan J.E."/>
            <person name="Torriani S.F.F."/>
            <person name="McDonald B.A."/>
            <person name="Oliver R.P."/>
        </authorList>
    </citation>
    <scope>NUCLEOTIDE SEQUENCE [LARGE SCALE GENOMIC DNA]</scope>
    <source>
        <strain>SN15 / ATCC MYA-4574 / FGSC 10173</strain>
    </source>
</reference>
<comment type="function">
    <text evidence="1">Component of the NOP7 complex, which is required for maturation of the 25S and 5.8S ribosomal RNAs and formation of the 60S ribosome.</text>
</comment>
<comment type="subunit">
    <text evidence="1">Component of the NOP7 complex, composed of ERB1, NOP7 and YTM1. The complex is held together by ERB1, which interacts with NOP7 via its N-terminal domain and with YTM1 via a high-affinity interaction between the seven-bladed beta-propeller domains of the 2 proteins. The NOP7 complex associates with the 66S pre-ribosome.</text>
</comment>
<comment type="subcellular location">
    <subcellularLocation>
        <location evidence="1">Nucleus</location>
        <location evidence="1">Nucleolus</location>
    </subcellularLocation>
    <subcellularLocation>
        <location evidence="1">Nucleus</location>
        <location evidence="1">Nucleoplasm</location>
    </subcellularLocation>
</comment>
<comment type="similarity">
    <text evidence="1">Belongs to the pescadillo family.</text>
</comment>
<protein>
    <recommendedName>
        <fullName evidence="1">Pescadillo homolog</fullName>
    </recommendedName>
    <alternativeName>
        <fullName evidence="1">Nucleolar protein 7 homolog</fullName>
    </alternativeName>
</protein>
<gene>
    <name evidence="1" type="primary">NOP7</name>
    <name type="ORF">SNOG_00837</name>
</gene>
<sequence length="676" mass="75588">MAGRSKKKGTSGAAKNYITRTRAVKKLQISLPDFRRLCIFKGIYPREPRNKKKVSKGSTAQTTFYYTKDIQYLLHEPLLAKFREHKSVAKKIGRALGRGEAGDAARLEKNLMPKVKLDHIIKERYPTFVDALRDLDDALSMLFLFANLPSSDHIPAKTIALCQRLTREFEHYVITSHALRKSFLSIKGIYYQATIQGQDILWLVPYRFVQRTGGDIDFRIMGTFVEFYTTLLGFVNYRLYTSVGLVYPPKFNAKSDEQGGELAAFQLEGKANATNGASNDHDDDVEINPEAQAKADKIAAMADDEDEQEVEMAEADAEDDDEEENTEGIDKFEPTAPDADILPQPQASSAEIASLFAPFTFYLAREVPRASLEFILKAFGCKRVGWDSILGDGAFTTNESDPNITHQIVDRPPLANGASAAGAEDAATPQVQWPHSTKPGRTYVQPQWVWDCINQGKLLRPDLYAPGAELPPHLSPWVKPKKGEYDPNLPLAAQQPDGEAEAFEDLADEDEDAFEVDDDEDMDAVADREGSVEVGEGMDVADSDDDDEDDSESDAEGGADGFAGFDDESEAESDISEGEAARLQHQRELEAEATGKKLDVKAPTKKEQNAAIRKKFDKKKRAEEEERDRQKMMLSNKKRKLLKRIEYGENKRDTESENLRRKRTRLEKAKAAAERA</sequence>
<accession>Q0V577</accession>
<keyword id="KW-0175">Coiled coil</keyword>
<keyword id="KW-0539">Nucleus</keyword>
<keyword id="KW-0690">Ribosome biogenesis</keyword>
<keyword id="KW-0698">rRNA processing</keyword>
<feature type="chain" id="PRO_0000370499" description="Pescadillo homolog">
    <location>
        <begin position="1"/>
        <end position="676"/>
    </location>
</feature>
<feature type="domain" description="BRCT" evidence="1">
    <location>
        <begin position="351"/>
        <end position="466"/>
    </location>
</feature>
<feature type="region of interest" description="Disordered" evidence="2">
    <location>
        <begin position="298"/>
        <end position="338"/>
    </location>
</feature>
<feature type="region of interest" description="Disordered" evidence="2">
    <location>
        <begin position="413"/>
        <end position="439"/>
    </location>
</feature>
<feature type="region of interest" description="Disordered" evidence="2">
    <location>
        <begin position="478"/>
        <end position="502"/>
    </location>
</feature>
<feature type="region of interest" description="Disordered" evidence="2">
    <location>
        <begin position="515"/>
        <end position="676"/>
    </location>
</feature>
<feature type="coiled-coil region" evidence="1">
    <location>
        <begin position="298"/>
        <end position="327"/>
    </location>
</feature>
<feature type="coiled-coil region" evidence="1">
    <location>
        <begin position="568"/>
        <end position="676"/>
    </location>
</feature>
<feature type="compositionally biased region" description="Acidic residues" evidence="2">
    <location>
        <begin position="302"/>
        <end position="327"/>
    </location>
</feature>
<feature type="compositionally biased region" description="Low complexity" evidence="2">
    <location>
        <begin position="415"/>
        <end position="427"/>
    </location>
</feature>
<feature type="compositionally biased region" description="Acidic residues" evidence="2">
    <location>
        <begin position="515"/>
        <end position="524"/>
    </location>
</feature>
<feature type="compositionally biased region" description="Acidic residues" evidence="2">
    <location>
        <begin position="539"/>
        <end position="557"/>
    </location>
</feature>
<feature type="compositionally biased region" description="Acidic residues" evidence="2">
    <location>
        <begin position="565"/>
        <end position="577"/>
    </location>
</feature>
<feature type="compositionally biased region" description="Basic and acidic residues" evidence="2">
    <location>
        <begin position="579"/>
        <end position="608"/>
    </location>
</feature>
<feature type="compositionally biased region" description="Basic and acidic residues" evidence="2">
    <location>
        <begin position="620"/>
        <end position="631"/>
    </location>
</feature>
<feature type="compositionally biased region" description="Basic and acidic residues" evidence="2">
    <location>
        <begin position="643"/>
        <end position="659"/>
    </location>
</feature>
<feature type="compositionally biased region" description="Basic and acidic residues" evidence="2">
    <location>
        <begin position="666"/>
        <end position="676"/>
    </location>
</feature>
<name>PESC_PHANO</name>
<dbReference type="EMBL" id="CH445325">
    <property type="protein sequence ID" value="EAT92332.1"/>
    <property type="molecule type" value="Genomic_DNA"/>
</dbReference>
<dbReference type="RefSeq" id="XP_001791508.1">
    <property type="nucleotide sequence ID" value="XM_001791456.1"/>
</dbReference>
<dbReference type="SMR" id="Q0V577"/>
<dbReference type="FunCoup" id="Q0V577">
    <property type="interactions" value="1181"/>
</dbReference>
<dbReference type="STRING" id="321614.Q0V577"/>
<dbReference type="EnsemblFungi" id="SNOT_00837">
    <property type="protein sequence ID" value="SNOT_00837"/>
    <property type="gene ID" value="SNOG_00837"/>
</dbReference>
<dbReference type="GeneID" id="5968567"/>
<dbReference type="KEGG" id="pno:SNOG_00837"/>
<dbReference type="VEuPathDB" id="FungiDB:JI435_008370"/>
<dbReference type="eggNOG" id="KOG2481">
    <property type="taxonomic scope" value="Eukaryota"/>
</dbReference>
<dbReference type="HOGENOM" id="CLU_019619_1_1_1"/>
<dbReference type="InParanoid" id="Q0V577"/>
<dbReference type="OMA" id="QKVTWIV"/>
<dbReference type="OrthoDB" id="10264910at2759"/>
<dbReference type="Proteomes" id="UP000001055">
    <property type="component" value="Unassembled WGS sequence"/>
</dbReference>
<dbReference type="GO" id="GO:0005654">
    <property type="term" value="C:nucleoplasm"/>
    <property type="evidence" value="ECO:0007669"/>
    <property type="project" value="UniProtKB-SubCell"/>
</dbReference>
<dbReference type="GO" id="GO:0070545">
    <property type="term" value="C:PeBoW complex"/>
    <property type="evidence" value="ECO:0000318"/>
    <property type="project" value="GO_Central"/>
</dbReference>
<dbReference type="GO" id="GO:0030687">
    <property type="term" value="C:preribosome, large subunit precursor"/>
    <property type="evidence" value="ECO:0007669"/>
    <property type="project" value="UniProtKB-UniRule"/>
</dbReference>
<dbReference type="GO" id="GO:0043021">
    <property type="term" value="F:ribonucleoprotein complex binding"/>
    <property type="evidence" value="ECO:0007669"/>
    <property type="project" value="UniProtKB-UniRule"/>
</dbReference>
<dbReference type="GO" id="GO:0003723">
    <property type="term" value="F:RNA binding"/>
    <property type="evidence" value="ECO:0000318"/>
    <property type="project" value="GO_Central"/>
</dbReference>
<dbReference type="GO" id="GO:0000466">
    <property type="term" value="P:maturation of 5.8S rRNA from tricistronic rRNA transcript (SSU-rRNA, 5.8S rRNA, LSU-rRNA)"/>
    <property type="evidence" value="ECO:0007669"/>
    <property type="project" value="UniProtKB-UniRule"/>
</dbReference>
<dbReference type="GO" id="GO:0000463">
    <property type="term" value="P:maturation of LSU-rRNA from tricistronic rRNA transcript (SSU-rRNA, 5.8S rRNA, LSU-rRNA)"/>
    <property type="evidence" value="ECO:0000318"/>
    <property type="project" value="GO_Central"/>
</dbReference>
<dbReference type="CDD" id="cd17709">
    <property type="entry name" value="BRCT_pescadillo_like"/>
    <property type="match status" value="1"/>
</dbReference>
<dbReference type="Gene3D" id="3.40.50.10190">
    <property type="entry name" value="BRCT domain"/>
    <property type="match status" value="1"/>
</dbReference>
<dbReference type="HAMAP" id="MF_03028">
    <property type="entry name" value="Pescadillo"/>
    <property type="match status" value="1"/>
</dbReference>
<dbReference type="InterPro" id="IPR001357">
    <property type="entry name" value="BRCT_dom"/>
</dbReference>
<dbReference type="InterPro" id="IPR036420">
    <property type="entry name" value="BRCT_dom_sf"/>
</dbReference>
<dbReference type="InterPro" id="IPR010613">
    <property type="entry name" value="PES"/>
</dbReference>
<dbReference type="PANTHER" id="PTHR12221">
    <property type="entry name" value="PESCADILLO - RELATED"/>
    <property type="match status" value="1"/>
</dbReference>
<dbReference type="PANTHER" id="PTHR12221:SF6">
    <property type="entry name" value="PESCADILLO HOMOLOG"/>
    <property type="match status" value="1"/>
</dbReference>
<dbReference type="Pfam" id="PF00533">
    <property type="entry name" value="BRCT"/>
    <property type="match status" value="1"/>
</dbReference>
<dbReference type="Pfam" id="PF06732">
    <property type="entry name" value="Pescadillo_N"/>
    <property type="match status" value="1"/>
</dbReference>
<dbReference type="SUPFAM" id="SSF52113">
    <property type="entry name" value="BRCT domain"/>
    <property type="match status" value="1"/>
</dbReference>
<dbReference type="PROSITE" id="PS50172">
    <property type="entry name" value="BRCT"/>
    <property type="match status" value="1"/>
</dbReference>
<evidence type="ECO:0000255" key="1">
    <source>
        <dbReference type="HAMAP-Rule" id="MF_03028"/>
    </source>
</evidence>
<evidence type="ECO:0000256" key="2">
    <source>
        <dbReference type="SAM" id="MobiDB-lite"/>
    </source>
</evidence>
<organism>
    <name type="scientific">Phaeosphaeria nodorum (strain SN15 / ATCC MYA-4574 / FGSC 10173)</name>
    <name type="common">Glume blotch fungus</name>
    <name type="synonym">Parastagonospora nodorum</name>
    <dbReference type="NCBI Taxonomy" id="321614"/>
    <lineage>
        <taxon>Eukaryota</taxon>
        <taxon>Fungi</taxon>
        <taxon>Dikarya</taxon>
        <taxon>Ascomycota</taxon>
        <taxon>Pezizomycotina</taxon>
        <taxon>Dothideomycetes</taxon>
        <taxon>Pleosporomycetidae</taxon>
        <taxon>Pleosporales</taxon>
        <taxon>Pleosporineae</taxon>
        <taxon>Phaeosphaeriaceae</taxon>
        <taxon>Parastagonospora</taxon>
    </lineage>
</organism>
<proteinExistence type="inferred from homology"/>